<protein>
    <recommendedName>
        <fullName evidence="1">Adenine deaminase 2</fullName>
        <shortName evidence="1">Adenase 2</shortName>
        <shortName evidence="1">Adenine aminase 2</shortName>
        <ecNumber evidence="1">3.5.4.2</ecNumber>
    </recommendedName>
</protein>
<organism>
    <name type="scientific">Desulfotalea psychrophila (strain LSv54 / DSM 12343)</name>
    <dbReference type="NCBI Taxonomy" id="177439"/>
    <lineage>
        <taxon>Bacteria</taxon>
        <taxon>Pseudomonadati</taxon>
        <taxon>Thermodesulfobacteriota</taxon>
        <taxon>Desulfobulbia</taxon>
        <taxon>Desulfobulbales</taxon>
        <taxon>Desulfocapsaceae</taxon>
        <taxon>Desulfotalea</taxon>
    </lineage>
</organism>
<dbReference type="EC" id="3.5.4.2" evidence="1"/>
<dbReference type="EMBL" id="CR522870">
    <property type="protein sequence ID" value="CAG36103.1"/>
    <property type="molecule type" value="Genomic_DNA"/>
</dbReference>
<dbReference type="RefSeq" id="WP_011188615.1">
    <property type="nucleotide sequence ID" value="NC_006138.1"/>
</dbReference>
<dbReference type="SMR" id="Q6ANH1"/>
<dbReference type="STRING" id="177439.DP1374"/>
<dbReference type="KEGG" id="dps:DP1374"/>
<dbReference type="eggNOG" id="COG1001">
    <property type="taxonomic scope" value="Bacteria"/>
</dbReference>
<dbReference type="HOGENOM" id="CLU_027935_0_0_7"/>
<dbReference type="OrthoDB" id="9775607at2"/>
<dbReference type="Proteomes" id="UP000000602">
    <property type="component" value="Chromosome"/>
</dbReference>
<dbReference type="GO" id="GO:0000034">
    <property type="term" value="F:adenine deaminase activity"/>
    <property type="evidence" value="ECO:0007669"/>
    <property type="project" value="UniProtKB-UniRule"/>
</dbReference>
<dbReference type="GO" id="GO:0006146">
    <property type="term" value="P:adenine catabolic process"/>
    <property type="evidence" value="ECO:0007669"/>
    <property type="project" value="InterPro"/>
</dbReference>
<dbReference type="CDD" id="cd01295">
    <property type="entry name" value="AdeC"/>
    <property type="match status" value="1"/>
</dbReference>
<dbReference type="Gene3D" id="3.20.20.140">
    <property type="entry name" value="Metal-dependent hydrolases"/>
    <property type="match status" value="1"/>
</dbReference>
<dbReference type="Gene3D" id="2.30.40.10">
    <property type="entry name" value="Urease, subunit C, domain 1"/>
    <property type="match status" value="1"/>
</dbReference>
<dbReference type="HAMAP" id="MF_01518">
    <property type="entry name" value="Adenine_deamin"/>
    <property type="match status" value="1"/>
</dbReference>
<dbReference type="InterPro" id="IPR006679">
    <property type="entry name" value="Adenine_deam"/>
</dbReference>
<dbReference type="InterPro" id="IPR026912">
    <property type="entry name" value="Adenine_deam_C"/>
</dbReference>
<dbReference type="InterPro" id="IPR006680">
    <property type="entry name" value="Amidohydro-rel"/>
</dbReference>
<dbReference type="InterPro" id="IPR011059">
    <property type="entry name" value="Metal-dep_hydrolase_composite"/>
</dbReference>
<dbReference type="InterPro" id="IPR032466">
    <property type="entry name" value="Metal_Hydrolase"/>
</dbReference>
<dbReference type="NCBIfam" id="TIGR01178">
    <property type="entry name" value="ade"/>
    <property type="match status" value="1"/>
</dbReference>
<dbReference type="PANTHER" id="PTHR11113:SF2">
    <property type="entry name" value="ADENINE DEAMINASE"/>
    <property type="match status" value="1"/>
</dbReference>
<dbReference type="PANTHER" id="PTHR11113">
    <property type="entry name" value="N-ACETYLGLUCOSAMINE-6-PHOSPHATE DEACETYLASE"/>
    <property type="match status" value="1"/>
</dbReference>
<dbReference type="Pfam" id="PF13382">
    <property type="entry name" value="Adenine_deam_C"/>
    <property type="match status" value="1"/>
</dbReference>
<dbReference type="Pfam" id="PF01979">
    <property type="entry name" value="Amidohydro_1"/>
    <property type="match status" value="1"/>
</dbReference>
<dbReference type="SUPFAM" id="SSF51338">
    <property type="entry name" value="Composite domain of metallo-dependent hydrolases"/>
    <property type="match status" value="1"/>
</dbReference>
<dbReference type="SUPFAM" id="SSF51556">
    <property type="entry name" value="Metallo-dependent hydrolases"/>
    <property type="match status" value="1"/>
</dbReference>
<sequence>MNKEALKRLIAVAAGREEPDLVIKNAKVVDVFNARVIQGDIAIVDGLIAGVGDYSCKNELDAEGQYAAPGFIDSHIHIESSYVSPEELGRLLVPHGTTTIIADPHEIANVCGLKGLDYMIEAAKRTALDVQMMLPSCVPATPFEHSGANIDAREMEKPITYDEVLGLGEFMDFPGVINGVDATIEKLLVAKRAGKPIDGHSPGVSGNALNAYASARIGTDHECATVEEMHERIARGMYVLLRQGSACYNLRTLLKGVTPVNSRRCLFCADDCQPKTILSLGHLDNHLRICAEEGIDPIMAIQMATINAAECFGLKDRGAIAPGLKADIVLMDSLTNCRVEKVWIDGVLIADSGKYLPEIKRHDISSTKGNFKVKDFSVKKLKLAIQSPQAHVINILPGGVVTSKEVVAINRNSDNEFVYGHGQDVVKIAVVERHQNTGNVAVALLQGYGIKRGAIALSVAHDSHNIIVVGVDDTDMACAVEALIAQDGGIVLVNGEEVVESMPMPIAGLMSDQCGEWVEAKLTSIHSKAHEVLGVNADVEPVMTLCFMSLAVIPEIKLTDMGLFDVTKFDFISLEA</sequence>
<evidence type="ECO:0000255" key="1">
    <source>
        <dbReference type="HAMAP-Rule" id="MF_01518"/>
    </source>
</evidence>
<reference key="1">
    <citation type="journal article" date="2004" name="Environ. Microbiol.">
        <title>The genome of Desulfotalea psychrophila, a sulfate-reducing bacterium from permanently cold Arctic sediments.</title>
        <authorList>
            <person name="Rabus R."/>
            <person name="Ruepp A."/>
            <person name="Frickey T."/>
            <person name="Rattei T."/>
            <person name="Fartmann B."/>
            <person name="Stark M."/>
            <person name="Bauer M."/>
            <person name="Zibat A."/>
            <person name="Lombardot T."/>
            <person name="Becker I."/>
            <person name="Amann J."/>
            <person name="Gellner K."/>
            <person name="Teeling H."/>
            <person name="Leuschner W.D."/>
            <person name="Gloeckner F.-O."/>
            <person name="Lupas A.N."/>
            <person name="Amann R."/>
            <person name="Klenk H.-P."/>
        </authorList>
    </citation>
    <scope>NUCLEOTIDE SEQUENCE [LARGE SCALE GENOMIC DNA]</scope>
    <source>
        <strain>DSM 12343 / LSv54</strain>
    </source>
</reference>
<accession>Q6ANH1</accession>
<proteinExistence type="inferred from homology"/>
<comment type="catalytic activity">
    <reaction evidence="1">
        <text>adenine + H2O + H(+) = hypoxanthine + NH4(+)</text>
        <dbReference type="Rhea" id="RHEA:23688"/>
        <dbReference type="ChEBI" id="CHEBI:15377"/>
        <dbReference type="ChEBI" id="CHEBI:15378"/>
        <dbReference type="ChEBI" id="CHEBI:16708"/>
        <dbReference type="ChEBI" id="CHEBI:17368"/>
        <dbReference type="ChEBI" id="CHEBI:28938"/>
        <dbReference type="EC" id="3.5.4.2"/>
    </reaction>
</comment>
<comment type="cofactor">
    <cofactor evidence="1">
        <name>Mn(2+)</name>
        <dbReference type="ChEBI" id="CHEBI:29035"/>
    </cofactor>
</comment>
<comment type="similarity">
    <text evidence="1">Belongs to the metallo-dependent hydrolases superfamily. Adenine deaminase family.</text>
</comment>
<keyword id="KW-0378">Hydrolase</keyword>
<keyword id="KW-0464">Manganese</keyword>
<keyword id="KW-1185">Reference proteome</keyword>
<gene>
    <name evidence="1" type="primary">ade2</name>
    <name type="ordered locus">DP1374</name>
</gene>
<name>ADEC2_DESPS</name>
<feature type="chain" id="PRO_0000142418" description="Adenine deaminase 2">
    <location>
        <begin position="1"/>
        <end position="576"/>
    </location>
</feature>